<proteinExistence type="inferred from homology"/>
<sequence length="115" mass="13104">MSNIIKQIEDEQMKQDVPAFRPGDTVEVKVWVVEGSKKRLQAFEGVVIAIRNRGLHSAFTVRKISNGEGVERVFQTHSPVVDSIAVKRRGAVRKAKLYYLRERTGKSARIKERLN</sequence>
<protein>
    <recommendedName>
        <fullName evidence="1">Large ribosomal subunit protein bL19</fullName>
    </recommendedName>
    <alternativeName>
        <fullName evidence="2">50S ribosomal protein L19</fullName>
    </alternativeName>
</protein>
<evidence type="ECO:0000255" key="1">
    <source>
        <dbReference type="HAMAP-Rule" id="MF_00402"/>
    </source>
</evidence>
<evidence type="ECO:0000305" key="2"/>
<accession>C6DCP8</accession>
<organism>
    <name type="scientific">Pectobacterium carotovorum subsp. carotovorum (strain PC1)</name>
    <dbReference type="NCBI Taxonomy" id="561230"/>
    <lineage>
        <taxon>Bacteria</taxon>
        <taxon>Pseudomonadati</taxon>
        <taxon>Pseudomonadota</taxon>
        <taxon>Gammaproteobacteria</taxon>
        <taxon>Enterobacterales</taxon>
        <taxon>Pectobacteriaceae</taxon>
        <taxon>Pectobacterium</taxon>
    </lineage>
</organism>
<feature type="chain" id="PRO_1000205897" description="Large ribosomal subunit protein bL19">
    <location>
        <begin position="1"/>
        <end position="115"/>
    </location>
</feature>
<dbReference type="EMBL" id="CP001657">
    <property type="protein sequence ID" value="ACT14223.1"/>
    <property type="molecule type" value="Genomic_DNA"/>
</dbReference>
<dbReference type="RefSeq" id="WP_010285987.1">
    <property type="nucleotide sequence ID" value="NC_012917.1"/>
</dbReference>
<dbReference type="SMR" id="C6DCP8"/>
<dbReference type="STRING" id="561230.PC1_3200"/>
<dbReference type="GeneID" id="90764510"/>
<dbReference type="KEGG" id="pct:PC1_3200"/>
<dbReference type="eggNOG" id="COG0335">
    <property type="taxonomic scope" value="Bacteria"/>
</dbReference>
<dbReference type="HOGENOM" id="CLU_103507_2_1_6"/>
<dbReference type="OrthoDB" id="9803541at2"/>
<dbReference type="Proteomes" id="UP000002736">
    <property type="component" value="Chromosome"/>
</dbReference>
<dbReference type="GO" id="GO:0022625">
    <property type="term" value="C:cytosolic large ribosomal subunit"/>
    <property type="evidence" value="ECO:0007669"/>
    <property type="project" value="TreeGrafter"/>
</dbReference>
<dbReference type="GO" id="GO:0003735">
    <property type="term" value="F:structural constituent of ribosome"/>
    <property type="evidence" value="ECO:0007669"/>
    <property type="project" value="InterPro"/>
</dbReference>
<dbReference type="GO" id="GO:0006412">
    <property type="term" value="P:translation"/>
    <property type="evidence" value="ECO:0007669"/>
    <property type="project" value="UniProtKB-UniRule"/>
</dbReference>
<dbReference type="FunFam" id="2.30.30.790:FF:000001">
    <property type="entry name" value="50S ribosomal protein L19"/>
    <property type="match status" value="1"/>
</dbReference>
<dbReference type="Gene3D" id="2.30.30.790">
    <property type="match status" value="1"/>
</dbReference>
<dbReference type="HAMAP" id="MF_00402">
    <property type="entry name" value="Ribosomal_bL19"/>
    <property type="match status" value="1"/>
</dbReference>
<dbReference type="InterPro" id="IPR001857">
    <property type="entry name" value="Ribosomal_bL19"/>
</dbReference>
<dbReference type="InterPro" id="IPR018257">
    <property type="entry name" value="Ribosomal_bL19_CS"/>
</dbReference>
<dbReference type="InterPro" id="IPR038657">
    <property type="entry name" value="Ribosomal_bL19_sf"/>
</dbReference>
<dbReference type="InterPro" id="IPR008991">
    <property type="entry name" value="Translation_prot_SH3-like_sf"/>
</dbReference>
<dbReference type="NCBIfam" id="TIGR01024">
    <property type="entry name" value="rplS_bact"/>
    <property type="match status" value="1"/>
</dbReference>
<dbReference type="PANTHER" id="PTHR15680:SF9">
    <property type="entry name" value="LARGE RIBOSOMAL SUBUNIT PROTEIN BL19M"/>
    <property type="match status" value="1"/>
</dbReference>
<dbReference type="PANTHER" id="PTHR15680">
    <property type="entry name" value="RIBOSOMAL PROTEIN L19"/>
    <property type="match status" value="1"/>
</dbReference>
<dbReference type="Pfam" id="PF01245">
    <property type="entry name" value="Ribosomal_L19"/>
    <property type="match status" value="1"/>
</dbReference>
<dbReference type="PIRSF" id="PIRSF002191">
    <property type="entry name" value="Ribosomal_L19"/>
    <property type="match status" value="1"/>
</dbReference>
<dbReference type="PRINTS" id="PR00061">
    <property type="entry name" value="RIBOSOMALL19"/>
</dbReference>
<dbReference type="SUPFAM" id="SSF50104">
    <property type="entry name" value="Translation proteins SH3-like domain"/>
    <property type="match status" value="1"/>
</dbReference>
<dbReference type="PROSITE" id="PS01015">
    <property type="entry name" value="RIBOSOMAL_L19"/>
    <property type="match status" value="1"/>
</dbReference>
<keyword id="KW-0687">Ribonucleoprotein</keyword>
<keyword id="KW-0689">Ribosomal protein</keyword>
<comment type="function">
    <text evidence="1">This protein is located at the 30S-50S ribosomal subunit interface and may play a role in the structure and function of the aminoacyl-tRNA binding site.</text>
</comment>
<comment type="similarity">
    <text evidence="1">Belongs to the bacterial ribosomal protein bL19 family.</text>
</comment>
<name>RL19_PECCP</name>
<gene>
    <name evidence="1" type="primary">rplS</name>
    <name type="ordered locus">PC1_3200</name>
</gene>
<reference key="1">
    <citation type="submission" date="2009-07" db="EMBL/GenBank/DDBJ databases">
        <title>Complete sequence of Pectobacterium carotovorum subsp. carotovorum PC1.</title>
        <authorList>
            <consortium name="US DOE Joint Genome Institute"/>
            <person name="Lucas S."/>
            <person name="Copeland A."/>
            <person name="Lapidus A."/>
            <person name="Glavina del Rio T."/>
            <person name="Tice H."/>
            <person name="Bruce D."/>
            <person name="Goodwin L."/>
            <person name="Pitluck S."/>
            <person name="Munk A.C."/>
            <person name="Brettin T."/>
            <person name="Detter J.C."/>
            <person name="Han C."/>
            <person name="Tapia R."/>
            <person name="Larimer F."/>
            <person name="Land M."/>
            <person name="Hauser L."/>
            <person name="Kyrpides N."/>
            <person name="Mikhailova N."/>
            <person name="Balakrishnan V."/>
            <person name="Glasner J."/>
            <person name="Perna N.T."/>
        </authorList>
    </citation>
    <scope>NUCLEOTIDE SEQUENCE [LARGE SCALE GENOMIC DNA]</scope>
    <source>
        <strain>PC1</strain>
    </source>
</reference>